<proteinExistence type="inferred from homology"/>
<gene>
    <name evidence="1" type="primary">rlmD</name>
    <name type="synonym">rumA</name>
    <name type="ordered locus">ETA_27240</name>
</gene>
<name>RLMD_ERWT9</name>
<comment type="function">
    <text evidence="1">Catalyzes the formation of 5-methyl-uridine at position 1939 (m5U1939) in 23S rRNA.</text>
</comment>
<comment type="catalytic activity">
    <reaction evidence="1">
        <text>uridine(1939) in 23S rRNA + S-adenosyl-L-methionine = 5-methyluridine(1939) in 23S rRNA + S-adenosyl-L-homocysteine + H(+)</text>
        <dbReference type="Rhea" id="RHEA:42908"/>
        <dbReference type="Rhea" id="RHEA-COMP:10278"/>
        <dbReference type="Rhea" id="RHEA-COMP:10279"/>
        <dbReference type="ChEBI" id="CHEBI:15378"/>
        <dbReference type="ChEBI" id="CHEBI:57856"/>
        <dbReference type="ChEBI" id="CHEBI:59789"/>
        <dbReference type="ChEBI" id="CHEBI:65315"/>
        <dbReference type="ChEBI" id="CHEBI:74447"/>
        <dbReference type="EC" id="2.1.1.190"/>
    </reaction>
</comment>
<comment type="similarity">
    <text evidence="1">Belongs to the class I-like SAM-binding methyltransferase superfamily. RNA M5U methyltransferase family. RlmD subfamily.</text>
</comment>
<organism>
    <name type="scientific">Erwinia tasmaniensis (strain DSM 17950 / CFBP 7177 / CIP 109463 / NCPPB 4357 / Et1/99)</name>
    <dbReference type="NCBI Taxonomy" id="465817"/>
    <lineage>
        <taxon>Bacteria</taxon>
        <taxon>Pseudomonadati</taxon>
        <taxon>Pseudomonadota</taxon>
        <taxon>Gammaproteobacteria</taxon>
        <taxon>Enterobacterales</taxon>
        <taxon>Erwiniaceae</taxon>
        <taxon>Erwinia</taxon>
    </lineage>
</organism>
<reference key="1">
    <citation type="journal article" date="2008" name="Environ. Microbiol.">
        <title>The genome of Erwinia tasmaniensis strain Et1/99, a non-pathogenic bacterium in the genus Erwinia.</title>
        <authorList>
            <person name="Kube M."/>
            <person name="Migdoll A.M."/>
            <person name="Mueller I."/>
            <person name="Kuhl H."/>
            <person name="Beck A."/>
            <person name="Reinhardt R."/>
            <person name="Geider K."/>
        </authorList>
    </citation>
    <scope>NUCLEOTIDE SEQUENCE [LARGE SCALE GENOMIC DNA]</scope>
    <source>
        <strain>DSM 17950 / CFBP 7177 / CIP 109463 / NCPPB 4357 / Et1/99</strain>
    </source>
</reference>
<sequence length="438" mass="48815">MAQFYSAKRRVTTRQTITVKVHDLDSFGQGVAHHNGKALFVQGALPDEVAEVSIIEDKRHFSRGVATRIVTASPQRVEPRCPHYSRCGGCQQQHASPTLQQESKAKALSRLLSKPRGETVEVDDIIASRPWGYRRRARLGLSFQPKSQTLHMGFREKSSSELVNISQCPILKPELNALLQPLHAVLSSLQAVRRLGHVELVQADSGSLLVLRHLDALTAEDRQKLERFSHQYRLSLFLAAESDTLEQVSGGMPHYQSHDLTLTFSPRDFIQVNDDVNQQMVARALAWLDLQPEDRVLDLFCGMGNFTLPMGKFAKNVVGVEGVAALVAKAGYNAELNCLNNVAFWQHNLEEDVSRQPWAVEGFNKVLLDPARAGAAGVMAHIIKIAPQRVVYVSCNPTTLARDSEILLTSGYQLERVTMLDMFPHTGHLESMVLFSRK</sequence>
<feature type="chain" id="PRO_1000200843" description="23S rRNA (uracil(1939)-C(5))-methyltransferase RlmD">
    <location>
        <begin position="1"/>
        <end position="438"/>
    </location>
</feature>
<feature type="domain" description="TRAM" evidence="1">
    <location>
        <begin position="10"/>
        <end position="68"/>
    </location>
</feature>
<feature type="active site" description="Nucleophile" evidence="1">
    <location>
        <position position="395"/>
    </location>
</feature>
<feature type="binding site" evidence="1">
    <location>
        <position position="81"/>
    </location>
    <ligand>
        <name>[4Fe-4S] cluster</name>
        <dbReference type="ChEBI" id="CHEBI:49883"/>
    </ligand>
</feature>
<feature type="binding site" evidence="1">
    <location>
        <position position="87"/>
    </location>
    <ligand>
        <name>[4Fe-4S] cluster</name>
        <dbReference type="ChEBI" id="CHEBI:49883"/>
    </ligand>
</feature>
<feature type="binding site" evidence="1">
    <location>
        <position position="90"/>
    </location>
    <ligand>
        <name>[4Fe-4S] cluster</name>
        <dbReference type="ChEBI" id="CHEBI:49883"/>
    </ligand>
</feature>
<feature type="binding site" evidence="1">
    <location>
        <position position="168"/>
    </location>
    <ligand>
        <name>[4Fe-4S] cluster</name>
        <dbReference type="ChEBI" id="CHEBI:49883"/>
    </ligand>
</feature>
<feature type="binding site" evidence="1">
    <location>
        <position position="271"/>
    </location>
    <ligand>
        <name>S-adenosyl-L-methionine</name>
        <dbReference type="ChEBI" id="CHEBI:59789"/>
    </ligand>
</feature>
<feature type="binding site" evidence="1">
    <location>
        <position position="300"/>
    </location>
    <ligand>
        <name>S-adenosyl-L-methionine</name>
        <dbReference type="ChEBI" id="CHEBI:59789"/>
    </ligand>
</feature>
<feature type="binding site" evidence="1">
    <location>
        <position position="305"/>
    </location>
    <ligand>
        <name>S-adenosyl-L-methionine</name>
        <dbReference type="ChEBI" id="CHEBI:59789"/>
    </ligand>
</feature>
<feature type="binding site" evidence="1">
    <location>
        <position position="321"/>
    </location>
    <ligand>
        <name>S-adenosyl-L-methionine</name>
        <dbReference type="ChEBI" id="CHEBI:59789"/>
    </ligand>
</feature>
<feature type="binding site" evidence="1">
    <location>
        <position position="348"/>
    </location>
    <ligand>
        <name>S-adenosyl-L-methionine</name>
        <dbReference type="ChEBI" id="CHEBI:59789"/>
    </ligand>
</feature>
<feature type="binding site" evidence="1">
    <location>
        <position position="369"/>
    </location>
    <ligand>
        <name>S-adenosyl-L-methionine</name>
        <dbReference type="ChEBI" id="CHEBI:59789"/>
    </ligand>
</feature>
<accession>B2VFZ2</accession>
<keyword id="KW-0004">4Fe-4S</keyword>
<keyword id="KW-0408">Iron</keyword>
<keyword id="KW-0411">Iron-sulfur</keyword>
<keyword id="KW-0479">Metal-binding</keyword>
<keyword id="KW-0489">Methyltransferase</keyword>
<keyword id="KW-1185">Reference proteome</keyword>
<keyword id="KW-0698">rRNA processing</keyword>
<keyword id="KW-0949">S-adenosyl-L-methionine</keyword>
<keyword id="KW-0808">Transferase</keyword>
<evidence type="ECO:0000255" key="1">
    <source>
        <dbReference type="HAMAP-Rule" id="MF_01010"/>
    </source>
</evidence>
<protein>
    <recommendedName>
        <fullName evidence="1">23S rRNA (uracil(1939)-C(5))-methyltransferase RlmD</fullName>
        <ecNumber evidence="1">2.1.1.190</ecNumber>
    </recommendedName>
    <alternativeName>
        <fullName evidence="1">23S rRNA(m5U1939)-methyltransferase</fullName>
    </alternativeName>
</protein>
<dbReference type="EC" id="2.1.1.190" evidence="1"/>
<dbReference type="EMBL" id="CU468135">
    <property type="protein sequence ID" value="CAO97770.1"/>
    <property type="molecule type" value="Genomic_DNA"/>
</dbReference>
<dbReference type="RefSeq" id="WP_012442427.1">
    <property type="nucleotide sequence ID" value="NC_010694.1"/>
</dbReference>
<dbReference type="SMR" id="B2VFZ2"/>
<dbReference type="STRING" id="465817.ETA_27240"/>
<dbReference type="KEGG" id="eta:ETA_27240"/>
<dbReference type="eggNOG" id="COG2265">
    <property type="taxonomic scope" value="Bacteria"/>
</dbReference>
<dbReference type="HOGENOM" id="CLU_014689_8_2_6"/>
<dbReference type="OrthoDB" id="9804590at2"/>
<dbReference type="Proteomes" id="UP000001726">
    <property type="component" value="Chromosome"/>
</dbReference>
<dbReference type="GO" id="GO:0051539">
    <property type="term" value="F:4 iron, 4 sulfur cluster binding"/>
    <property type="evidence" value="ECO:0007669"/>
    <property type="project" value="UniProtKB-KW"/>
</dbReference>
<dbReference type="GO" id="GO:0005506">
    <property type="term" value="F:iron ion binding"/>
    <property type="evidence" value="ECO:0007669"/>
    <property type="project" value="UniProtKB-UniRule"/>
</dbReference>
<dbReference type="GO" id="GO:0003723">
    <property type="term" value="F:RNA binding"/>
    <property type="evidence" value="ECO:0007669"/>
    <property type="project" value="InterPro"/>
</dbReference>
<dbReference type="GO" id="GO:0070041">
    <property type="term" value="F:rRNA (uridine-C5-)-methyltransferase activity"/>
    <property type="evidence" value="ECO:0007669"/>
    <property type="project" value="UniProtKB-UniRule"/>
</dbReference>
<dbReference type="GO" id="GO:0070475">
    <property type="term" value="P:rRNA base methylation"/>
    <property type="evidence" value="ECO:0007669"/>
    <property type="project" value="TreeGrafter"/>
</dbReference>
<dbReference type="CDD" id="cd02440">
    <property type="entry name" value="AdoMet_MTases"/>
    <property type="match status" value="1"/>
</dbReference>
<dbReference type="FunFam" id="3.40.50.150:FF:000009">
    <property type="entry name" value="23S rRNA (Uracil(1939)-C(5))-methyltransferase RlmD"/>
    <property type="match status" value="1"/>
</dbReference>
<dbReference type="FunFam" id="2.40.50.140:FF:000097">
    <property type="entry name" value="23S rRNA (uracil(1939)-C(5))-methyltransferase RlmD"/>
    <property type="match status" value="1"/>
</dbReference>
<dbReference type="Gene3D" id="2.40.50.1070">
    <property type="match status" value="1"/>
</dbReference>
<dbReference type="Gene3D" id="2.40.50.140">
    <property type="entry name" value="Nucleic acid-binding proteins"/>
    <property type="match status" value="1"/>
</dbReference>
<dbReference type="Gene3D" id="3.40.50.150">
    <property type="entry name" value="Vaccinia Virus protein VP39"/>
    <property type="match status" value="1"/>
</dbReference>
<dbReference type="HAMAP" id="MF_01010">
    <property type="entry name" value="23SrRNA_methyltr_RlmD"/>
    <property type="match status" value="1"/>
</dbReference>
<dbReference type="InterPro" id="IPR001566">
    <property type="entry name" value="23S_rRNA_MeTrfase_RlmD"/>
</dbReference>
<dbReference type="InterPro" id="IPR030390">
    <property type="entry name" value="MeTrfase_TrmA_AS"/>
</dbReference>
<dbReference type="InterPro" id="IPR030391">
    <property type="entry name" value="MeTrfase_TrmA_CS"/>
</dbReference>
<dbReference type="InterPro" id="IPR012340">
    <property type="entry name" value="NA-bd_OB-fold"/>
</dbReference>
<dbReference type="InterPro" id="IPR029063">
    <property type="entry name" value="SAM-dependent_MTases_sf"/>
</dbReference>
<dbReference type="InterPro" id="IPR002792">
    <property type="entry name" value="TRAM_dom"/>
</dbReference>
<dbReference type="InterPro" id="IPR010280">
    <property type="entry name" value="U5_MeTrfase_fam"/>
</dbReference>
<dbReference type="NCBIfam" id="NF009639">
    <property type="entry name" value="PRK13168.1"/>
    <property type="match status" value="1"/>
</dbReference>
<dbReference type="NCBIfam" id="TIGR00479">
    <property type="entry name" value="rumA"/>
    <property type="match status" value="1"/>
</dbReference>
<dbReference type="PANTHER" id="PTHR11061:SF49">
    <property type="entry name" value="23S RRNA (URACIL(1939)-C(5))-METHYLTRANSFERASE RLMD"/>
    <property type="match status" value="1"/>
</dbReference>
<dbReference type="PANTHER" id="PTHR11061">
    <property type="entry name" value="RNA M5U METHYLTRANSFERASE"/>
    <property type="match status" value="1"/>
</dbReference>
<dbReference type="Pfam" id="PF01938">
    <property type="entry name" value="TRAM"/>
    <property type="match status" value="1"/>
</dbReference>
<dbReference type="Pfam" id="PF05958">
    <property type="entry name" value="tRNA_U5-meth_tr"/>
    <property type="match status" value="1"/>
</dbReference>
<dbReference type="SUPFAM" id="SSF50249">
    <property type="entry name" value="Nucleic acid-binding proteins"/>
    <property type="match status" value="1"/>
</dbReference>
<dbReference type="SUPFAM" id="SSF53335">
    <property type="entry name" value="S-adenosyl-L-methionine-dependent methyltransferases"/>
    <property type="match status" value="1"/>
</dbReference>
<dbReference type="PROSITE" id="PS51687">
    <property type="entry name" value="SAM_MT_RNA_M5U"/>
    <property type="match status" value="1"/>
</dbReference>
<dbReference type="PROSITE" id="PS50926">
    <property type="entry name" value="TRAM"/>
    <property type="match status" value="1"/>
</dbReference>
<dbReference type="PROSITE" id="PS01230">
    <property type="entry name" value="TRMA_1"/>
    <property type="match status" value="1"/>
</dbReference>
<dbReference type="PROSITE" id="PS01231">
    <property type="entry name" value="TRMA_2"/>
    <property type="match status" value="1"/>
</dbReference>